<organism>
    <name type="scientific">Drosophila melanogaster</name>
    <name type="common">Fruit fly</name>
    <dbReference type="NCBI Taxonomy" id="7227"/>
    <lineage>
        <taxon>Eukaryota</taxon>
        <taxon>Metazoa</taxon>
        <taxon>Ecdysozoa</taxon>
        <taxon>Arthropoda</taxon>
        <taxon>Hexapoda</taxon>
        <taxon>Insecta</taxon>
        <taxon>Pterygota</taxon>
        <taxon>Neoptera</taxon>
        <taxon>Endopterygota</taxon>
        <taxon>Diptera</taxon>
        <taxon>Brachycera</taxon>
        <taxon>Muscomorpha</taxon>
        <taxon>Ephydroidea</taxon>
        <taxon>Drosophilidae</taxon>
        <taxon>Drosophila</taxon>
        <taxon>Sophophora</taxon>
    </lineage>
</organism>
<reference key="1">
    <citation type="journal article" date="2000" name="Science">
        <title>The genome sequence of Drosophila melanogaster.</title>
        <authorList>
            <person name="Adams M.D."/>
            <person name="Celniker S.E."/>
            <person name="Holt R.A."/>
            <person name="Evans C.A."/>
            <person name="Gocayne J.D."/>
            <person name="Amanatides P.G."/>
            <person name="Scherer S.E."/>
            <person name="Li P.W."/>
            <person name="Hoskins R.A."/>
            <person name="Galle R.F."/>
            <person name="George R.A."/>
            <person name="Lewis S.E."/>
            <person name="Richards S."/>
            <person name="Ashburner M."/>
            <person name="Henderson S.N."/>
            <person name="Sutton G.G."/>
            <person name="Wortman J.R."/>
            <person name="Yandell M.D."/>
            <person name="Zhang Q."/>
            <person name="Chen L.X."/>
            <person name="Brandon R.C."/>
            <person name="Rogers Y.-H.C."/>
            <person name="Blazej R.G."/>
            <person name="Champe M."/>
            <person name="Pfeiffer B.D."/>
            <person name="Wan K.H."/>
            <person name="Doyle C."/>
            <person name="Baxter E.G."/>
            <person name="Helt G."/>
            <person name="Nelson C.R."/>
            <person name="Miklos G.L.G."/>
            <person name="Abril J.F."/>
            <person name="Agbayani A."/>
            <person name="An H.-J."/>
            <person name="Andrews-Pfannkoch C."/>
            <person name="Baldwin D."/>
            <person name="Ballew R.M."/>
            <person name="Basu A."/>
            <person name="Baxendale J."/>
            <person name="Bayraktaroglu L."/>
            <person name="Beasley E.M."/>
            <person name="Beeson K.Y."/>
            <person name="Benos P.V."/>
            <person name="Berman B.P."/>
            <person name="Bhandari D."/>
            <person name="Bolshakov S."/>
            <person name="Borkova D."/>
            <person name="Botchan M.R."/>
            <person name="Bouck J."/>
            <person name="Brokstein P."/>
            <person name="Brottier P."/>
            <person name="Burtis K.C."/>
            <person name="Busam D.A."/>
            <person name="Butler H."/>
            <person name="Cadieu E."/>
            <person name="Center A."/>
            <person name="Chandra I."/>
            <person name="Cherry J.M."/>
            <person name="Cawley S."/>
            <person name="Dahlke C."/>
            <person name="Davenport L.B."/>
            <person name="Davies P."/>
            <person name="de Pablos B."/>
            <person name="Delcher A."/>
            <person name="Deng Z."/>
            <person name="Mays A.D."/>
            <person name="Dew I."/>
            <person name="Dietz S.M."/>
            <person name="Dodson K."/>
            <person name="Doup L.E."/>
            <person name="Downes M."/>
            <person name="Dugan-Rocha S."/>
            <person name="Dunkov B.C."/>
            <person name="Dunn P."/>
            <person name="Durbin K.J."/>
            <person name="Evangelista C.C."/>
            <person name="Ferraz C."/>
            <person name="Ferriera S."/>
            <person name="Fleischmann W."/>
            <person name="Fosler C."/>
            <person name="Gabrielian A.E."/>
            <person name="Garg N.S."/>
            <person name="Gelbart W.M."/>
            <person name="Glasser K."/>
            <person name="Glodek A."/>
            <person name="Gong F."/>
            <person name="Gorrell J.H."/>
            <person name="Gu Z."/>
            <person name="Guan P."/>
            <person name="Harris M."/>
            <person name="Harris N.L."/>
            <person name="Harvey D.A."/>
            <person name="Heiman T.J."/>
            <person name="Hernandez J.R."/>
            <person name="Houck J."/>
            <person name="Hostin D."/>
            <person name="Houston K.A."/>
            <person name="Howland T.J."/>
            <person name="Wei M.-H."/>
            <person name="Ibegwam C."/>
            <person name="Jalali M."/>
            <person name="Kalush F."/>
            <person name="Karpen G.H."/>
            <person name="Ke Z."/>
            <person name="Kennison J.A."/>
            <person name="Ketchum K.A."/>
            <person name="Kimmel B.E."/>
            <person name="Kodira C.D."/>
            <person name="Kraft C.L."/>
            <person name="Kravitz S."/>
            <person name="Kulp D."/>
            <person name="Lai Z."/>
            <person name="Lasko P."/>
            <person name="Lei Y."/>
            <person name="Levitsky A.A."/>
            <person name="Li J.H."/>
            <person name="Li Z."/>
            <person name="Liang Y."/>
            <person name="Lin X."/>
            <person name="Liu X."/>
            <person name="Mattei B."/>
            <person name="McIntosh T.C."/>
            <person name="McLeod M.P."/>
            <person name="McPherson D."/>
            <person name="Merkulov G."/>
            <person name="Milshina N.V."/>
            <person name="Mobarry C."/>
            <person name="Morris J."/>
            <person name="Moshrefi A."/>
            <person name="Mount S.M."/>
            <person name="Moy M."/>
            <person name="Murphy B."/>
            <person name="Murphy L."/>
            <person name="Muzny D.M."/>
            <person name="Nelson D.L."/>
            <person name="Nelson D.R."/>
            <person name="Nelson K.A."/>
            <person name="Nixon K."/>
            <person name="Nusskern D.R."/>
            <person name="Pacleb J.M."/>
            <person name="Palazzolo M."/>
            <person name="Pittman G.S."/>
            <person name="Pan S."/>
            <person name="Pollard J."/>
            <person name="Puri V."/>
            <person name="Reese M.G."/>
            <person name="Reinert K."/>
            <person name="Remington K."/>
            <person name="Saunders R.D.C."/>
            <person name="Scheeler F."/>
            <person name="Shen H."/>
            <person name="Shue B.C."/>
            <person name="Siden-Kiamos I."/>
            <person name="Simpson M."/>
            <person name="Skupski M.P."/>
            <person name="Smith T.J."/>
            <person name="Spier E."/>
            <person name="Spradling A.C."/>
            <person name="Stapleton M."/>
            <person name="Strong R."/>
            <person name="Sun E."/>
            <person name="Svirskas R."/>
            <person name="Tector C."/>
            <person name="Turner R."/>
            <person name="Venter E."/>
            <person name="Wang A.H."/>
            <person name="Wang X."/>
            <person name="Wang Z.-Y."/>
            <person name="Wassarman D.A."/>
            <person name="Weinstock G.M."/>
            <person name="Weissenbach J."/>
            <person name="Williams S.M."/>
            <person name="Woodage T."/>
            <person name="Worley K.C."/>
            <person name="Wu D."/>
            <person name="Yang S."/>
            <person name="Yao Q.A."/>
            <person name="Ye J."/>
            <person name="Yeh R.-F."/>
            <person name="Zaveri J.S."/>
            <person name="Zhan M."/>
            <person name="Zhang G."/>
            <person name="Zhao Q."/>
            <person name="Zheng L."/>
            <person name="Zheng X.H."/>
            <person name="Zhong F.N."/>
            <person name="Zhong W."/>
            <person name="Zhou X."/>
            <person name="Zhu S.C."/>
            <person name="Zhu X."/>
            <person name="Smith H.O."/>
            <person name="Gibbs R.A."/>
            <person name="Myers E.W."/>
            <person name="Rubin G.M."/>
            <person name="Venter J.C."/>
        </authorList>
    </citation>
    <scope>NUCLEOTIDE SEQUENCE [LARGE SCALE GENOMIC DNA]</scope>
    <source>
        <strain>Berkeley</strain>
    </source>
</reference>
<reference key="2">
    <citation type="journal article" date="2002" name="Genome Biol.">
        <title>Annotation of the Drosophila melanogaster euchromatic genome: a systematic review.</title>
        <authorList>
            <person name="Misra S."/>
            <person name="Crosby M.A."/>
            <person name="Mungall C.J."/>
            <person name="Matthews B.B."/>
            <person name="Campbell K.S."/>
            <person name="Hradecky P."/>
            <person name="Huang Y."/>
            <person name="Kaminker J.S."/>
            <person name="Millburn G.H."/>
            <person name="Prochnik S.E."/>
            <person name="Smith C.D."/>
            <person name="Tupy J.L."/>
            <person name="Whitfield E.J."/>
            <person name="Bayraktaroglu L."/>
            <person name="Berman B.P."/>
            <person name="Bettencourt B.R."/>
            <person name="Celniker S.E."/>
            <person name="de Grey A.D.N.J."/>
            <person name="Drysdale R.A."/>
            <person name="Harris N.L."/>
            <person name="Richter J."/>
            <person name="Russo S."/>
            <person name="Schroeder A.J."/>
            <person name="Shu S.Q."/>
            <person name="Stapleton M."/>
            <person name="Yamada C."/>
            <person name="Ashburner M."/>
            <person name="Gelbart W.M."/>
            <person name="Rubin G.M."/>
            <person name="Lewis S.E."/>
        </authorList>
    </citation>
    <scope>GENOME REANNOTATION</scope>
    <source>
        <strain>Berkeley</strain>
    </source>
</reference>
<reference key="3">
    <citation type="journal article" date="2002" name="Genome Biol.">
        <title>A Drosophila full-length cDNA resource.</title>
        <authorList>
            <person name="Stapleton M."/>
            <person name="Carlson J.W."/>
            <person name="Brokstein P."/>
            <person name="Yu C."/>
            <person name="Champe M."/>
            <person name="George R.A."/>
            <person name="Guarin H."/>
            <person name="Kronmiller B."/>
            <person name="Pacleb J.M."/>
            <person name="Park S."/>
            <person name="Wan K.H."/>
            <person name="Rubin G.M."/>
            <person name="Celniker S.E."/>
        </authorList>
    </citation>
    <scope>NUCLEOTIDE SEQUENCE [LARGE SCALE MRNA] (ISOFORM 2)</scope>
    <source>
        <strain>Berkeley</strain>
        <tissue>Head</tissue>
    </source>
</reference>
<reference key="4">
    <citation type="submission" date="2006-08" db="EMBL/GenBank/DDBJ databases">
        <authorList>
            <person name="Celniker S."/>
            <person name="Carlson J."/>
            <person name="Wan K."/>
            <person name="Frise E."/>
            <person name="Hoskins R."/>
            <person name="Park S."/>
            <person name="Svirskas R."/>
            <person name="Rubin G."/>
        </authorList>
    </citation>
    <scope>NUCLEOTIDE SEQUENCE [LARGE SCALE MRNA]</scope>
    <source>
        <strain>Berkeley</strain>
        <tissue>Embryo</tissue>
    </source>
</reference>
<reference evidence="9 10" key="5">
    <citation type="journal article" date="2018" name="Proc. Natl. Acad. Sci. U.S.A.">
        <title>Structural determinants and cellular environment define processed actin as the sole substrate of the N-terminal acetyltransferase NAA80.</title>
        <authorList>
            <person name="Goris M."/>
            <person name="Magin R.S."/>
            <person name="Foyn H."/>
            <person name="Myklebust L.M."/>
            <person name="Varland S."/>
            <person name="Ree R."/>
            <person name="Drazic A."/>
            <person name="Bhambra P."/>
            <person name="Stoeve S.I."/>
            <person name="Baumann M."/>
            <person name="Haug B.E."/>
            <person name="Marmorstein R."/>
            <person name="Arnesen T."/>
        </authorList>
    </citation>
    <scope>X-RAY CRYSTALLOGRAPHY (1.76 ANGSTROMS) OF 20-178 IN COMPLEX WITH ACETYL-COA AND SUBSTRATE</scope>
    <scope>CATALYTIC ACTIVITY</scope>
    <scope>MUTAGENESIS OF TRP-46; ARG-53; LYS-83; GLU-97 AND SER-98</scope>
</reference>
<proteinExistence type="evidence at protein level"/>
<keyword id="KW-0002">3D-structure</keyword>
<keyword id="KW-0012">Acyltransferase</keyword>
<keyword id="KW-0025">Alternative splicing</keyword>
<keyword id="KW-1185">Reference proteome</keyword>
<keyword id="KW-0808">Transferase</keyword>
<evidence type="ECO:0000250" key="1">
    <source>
        <dbReference type="UniProtKB" id="Q93015"/>
    </source>
</evidence>
<evidence type="ECO:0000255" key="2">
    <source>
        <dbReference type="PROSITE-ProRule" id="PRU00532"/>
    </source>
</evidence>
<evidence type="ECO:0000269" key="3">
    <source>
    </source>
</evidence>
<evidence type="ECO:0000303" key="4">
    <source>
    </source>
</evidence>
<evidence type="ECO:0000305" key="5"/>
<evidence type="ECO:0000312" key="6">
    <source>
        <dbReference type="FlyBase" id="FBgn0037747"/>
    </source>
</evidence>
<evidence type="ECO:0000312" key="7">
    <source>
        <dbReference type="PDB" id="5WJD"/>
    </source>
</evidence>
<evidence type="ECO:0000312" key="8">
    <source>
        <dbReference type="PDB" id="5WJE"/>
    </source>
</evidence>
<evidence type="ECO:0007744" key="9">
    <source>
        <dbReference type="PDB" id="5WJD"/>
    </source>
</evidence>
<evidence type="ECO:0007744" key="10">
    <source>
        <dbReference type="PDB" id="5WJE"/>
    </source>
</evidence>
<evidence type="ECO:0007829" key="11">
    <source>
        <dbReference type="PDB" id="5WJD"/>
    </source>
</evidence>
<evidence type="ECO:0007829" key="12">
    <source>
        <dbReference type="PDB" id="5WJE"/>
    </source>
</evidence>
<name>NAA80_DROME</name>
<dbReference type="EC" id="2.3.1.-" evidence="3"/>
<dbReference type="EMBL" id="AE014297">
    <property type="protein sequence ID" value="AAF54446.1"/>
    <property type="molecule type" value="Genomic_DNA"/>
</dbReference>
<dbReference type="EMBL" id="AE014297">
    <property type="protein sequence ID" value="AAX52942.1"/>
    <property type="molecule type" value="Genomic_DNA"/>
</dbReference>
<dbReference type="EMBL" id="AY060239">
    <property type="protein sequence ID" value="AAL25278.1"/>
    <property type="molecule type" value="mRNA"/>
</dbReference>
<dbReference type="EMBL" id="BT001904">
    <property type="protein sequence ID" value="AAN71693.1"/>
    <property type="molecule type" value="mRNA"/>
</dbReference>
<dbReference type="EMBL" id="BT044285">
    <property type="protein sequence ID" value="ACH92350.1"/>
    <property type="molecule type" value="mRNA"/>
</dbReference>
<dbReference type="RefSeq" id="NP_001014612.1">
    <molecule id="Q59DX8-1"/>
    <property type="nucleotide sequence ID" value="NM_001014612.3"/>
</dbReference>
<dbReference type="RefSeq" id="NP_649942.1">
    <molecule id="Q59DX8-2"/>
    <property type="nucleotide sequence ID" value="NM_141685.5"/>
</dbReference>
<dbReference type="PDB" id="5WJD">
    <property type="method" value="X-ray"/>
    <property type="resolution" value="2.00 A"/>
    <property type="chains" value="A=20-178"/>
</dbReference>
<dbReference type="PDB" id="5WJE">
    <property type="method" value="X-ray"/>
    <property type="resolution" value="1.76 A"/>
    <property type="chains" value="A=20-178"/>
</dbReference>
<dbReference type="PDBsum" id="5WJD"/>
<dbReference type="PDBsum" id="5WJE"/>
<dbReference type="SMR" id="Q59DX8"/>
<dbReference type="FunCoup" id="Q59DX8">
    <property type="interactions" value="287"/>
</dbReference>
<dbReference type="IntAct" id="Q59DX8">
    <property type="interactions" value="2"/>
</dbReference>
<dbReference type="STRING" id="7227.FBpp0100038"/>
<dbReference type="PaxDb" id="7227-FBpp0100038"/>
<dbReference type="DNASU" id="41195"/>
<dbReference type="EnsemblMetazoa" id="FBtr0082134">
    <molecule id="Q59DX8-2"/>
    <property type="protein sequence ID" value="FBpp0081612"/>
    <property type="gene ID" value="FBgn0037747"/>
</dbReference>
<dbReference type="EnsemblMetazoa" id="FBtr0100583">
    <molecule id="Q59DX8-1"/>
    <property type="protein sequence ID" value="FBpp0100038"/>
    <property type="gene ID" value="FBgn0037747"/>
</dbReference>
<dbReference type="GeneID" id="41195"/>
<dbReference type="KEGG" id="dme:Dmel_CG8481"/>
<dbReference type="UCSC" id="CG8481-RA">
    <property type="organism name" value="d. melanogaster"/>
</dbReference>
<dbReference type="UCSC" id="CG8481-RB">
    <molecule id="Q59DX8-1"/>
    <property type="organism name" value="d. melanogaster"/>
</dbReference>
<dbReference type="AGR" id="FB:FBgn0037747"/>
<dbReference type="CTD" id="24142"/>
<dbReference type="FlyBase" id="FBgn0037747">
    <property type="gene designation" value="Naa80"/>
</dbReference>
<dbReference type="VEuPathDB" id="VectorBase:FBgn0037747"/>
<dbReference type="eggNOG" id="KOG3397">
    <property type="taxonomic scope" value="Eukaryota"/>
</dbReference>
<dbReference type="GeneTree" id="ENSGT00390000000980"/>
<dbReference type="HOGENOM" id="CLU_077855_1_0_1"/>
<dbReference type="InParanoid" id="Q59DX8"/>
<dbReference type="OMA" id="QCIALIN"/>
<dbReference type="OrthoDB" id="329272at2759"/>
<dbReference type="PhylomeDB" id="Q59DX8"/>
<dbReference type="SABIO-RK" id="Q59DX8"/>
<dbReference type="BioGRID-ORCS" id="41195">
    <property type="hits" value="0 hits in 1 CRISPR screen"/>
</dbReference>
<dbReference type="GenomeRNAi" id="41195"/>
<dbReference type="PRO" id="PR:Q59DX8"/>
<dbReference type="Proteomes" id="UP000000803">
    <property type="component" value="Chromosome 3R"/>
</dbReference>
<dbReference type="Bgee" id="FBgn0037747">
    <property type="expression patterns" value="Expressed in muscle cell in insect leg and 224 other cell types or tissues"/>
</dbReference>
<dbReference type="ExpressionAtlas" id="Q59DX8">
    <property type="expression patterns" value="baseline and differential"/>
</dbReference>
<dbReference type="GO" id="GO:0005737">
    <property type="term" value="C:cytoplasm"/>
    <property type="evidence" value="ECO:0000318"/>
    <property type="project" value="GO_Central"/>
</dbReference>
<dbReference type="GO" id="GO:1905502">
    <property type="term" value="F:acetyl-CoA binding"/>
    <property type="evidence" value="ECO:0000318"/>
    <property type="project" value="GO_Central"/>
</dbReference>
<dbReference type="GO" id="GO:0004596">
    <property type="term" value="F:protein-N-terminal amino-acid acetyltransferase activity"/>
    <property type="evidence" value="ECO:0000314"/>
    <property type="project" value="UniProtKB"/>
</dbReference>
<dbReference type="GO" id="GO:0017190">
    <property type="term" value="P:N-terminal peptidyl-aspartic acid acetylation"/>
    <property type="evidence" value="ECO:0000314"/>
    <property type="project" value="UniProtKB"/>
</dbReference>
<dbReference type="GO" id="GO:0018002">
    <property type="term" value="P:N-terminal peptidyl-glutamic acid acetylation"/>
    <property type="evidence" value="ECO:0000314"/>
    <property type="project" value="UniProtKB"/>
</dbReference>
<dbReference type="GO" id="GO:0008064">
    <property type="term" value="P:regulation of actin polymerization or depolymerization"/>
    <property type="evidence" value="ECO:0000318"/>
    <property type="project" value="GO_Central"/>
</dbReference>
<dbReference type="CDD" id="cd04301">
    <property type="entry name" value="NAT_SF"/>
    <property type="match status" value="1"/>
</dbReference>
<dbReference type="FunFam" id="3.40.630.30:FF:000076">
    <property type="entry name" value="Blast:N-acetyltransferase 6"/>
    <property type="match status" value="1"/>
</dbReference>
<dbReference type="Gene3D" id="3.40.630.30">
    <property type="match status" value="1"/>
</dbReference>
<dbReference type="InterPro" id="IPR016181">
    <property type="entry name" value="Acyl_CoA_acyltransferase"/>
</dbReference>
<dbReference type="InterPro" id="IPR000182">
    <property type="entry name" value="GNAT_dom"/>
</dbReference>
<dbReference type="InterPro" id="IPR039840">
    <property type="entry name" value="NAA80"/>
</dbReference>
<dbReference type="PANTHER" id="PTHR13538">
    <property type="entry name" value="N-ACETYLTRANSFERASE 6"/>
    <property type="match status" value="1"/>
</dbReference>
<dbReference type="PANTHER" id="PTHR13538:SF4">
    <property type="entry name" value="N-ALPHA-ACETYLTRANSFERASE 80"/>
    <property type="match status" value="1"/>
</dbReference>
<dbReference type="Pfam" id="PF00583">
    <property type="entry name" value="Acetyltransf_1"/>
    <property type="match status" value="1"/>
</dbReference>
<dbReference type="SUPFAM" id="SSF55729">
    <property type="entry name" value="Acyl-CoA N-acyltransferases (Nat)"/>
    <property type="match status" value="1"/>
</dbReference>
<dbReference type="PROSITE" id="PS51186">
    <property type="entry name" value="GNAT"/>
    <property type="match status" value="1"/>
</dbReference>
<sequence length="178" mass="20373">MRYIKSEPYYEGLPPFNVSGSPFNVVPIHNYPELMKDTCALINAEWPRSETARMRSLEASCDSLPCSLVLTTEGMCRVIAHLKLSPINSKKKACFVESVVVDKRHRGQGFGKLIMKFAEDYCRVVLDLKTIYLSTIDQDGFYERIGYEYCAPITMYGPRHCELPSLQNAKKKYMKKVL</sequence>
<accession>Q59DX8</accession>
<accession>Q8IG82</accession>
<accession>Q9VH73</accession>
<protein>
    <recommendedName>
        <fullName evidence="4">N-alpha-acetyltransferase 80</fullName>
        <shortName evidence="4">DmNAA80</shortName>
        <ecNumber evidence="3">2.3.1.-</ecNumber>
    </recommendedName>
</protein>
<feature type="chain" id="PRO_0000445573" description="N-alpha-acetyltransferase 80">
    <location>
        <begin position="1"/>
        <end position="178"/>
    </location>
</feature>
<feature type="domain" description="N-acetyltransferase" evidence="2">
    <location>
        <begin position="26"/>
        <end position="178"/>
    </location>
</feature>
<feature type="binding site" evidence="3 8">
    <location>
        <position position="48"/>
    </location>
    <ligand>
        <name>substrate</name>
    </ligand>
</feature>
<feature type="binding site" evidence="3 8">
    <location>
        <begin position="53"/>
        <end position="56"/>
    </location>
    <ligand>
        <name>substrate</name>
    </ligand>
</feature>
<feature type="binding site" evidence="3 8">
    <location>
        <position position="88"/>
    </location>
    <ligand>
        <name>substrate</name>
    </ligand>
</feature>
<feature type="binding site" evidence="3 8">
    <location>
        <position position="98"/>
    </location>
    <ligand>
        <name>substrate</name>
    </ligand>
</feature>
<feature type="binding site" evidence="3 7 8">
    <location>
        <begin position="99"/>
        <end position="101"/>
    </location>
    <ligand>
        <name>acetyl-CoA</name>
        <dbReference type="ChEBI" id="CHEBI:57288"/>
    </ligand>
</feature>
<feature type="binding site" evidence="3 7 8">
    <location>
        <begin position="107"/>
        <end position="112"/>
    </location>
    <ligand>
        <name>acetyl-CoA</name>
        <dbReference type="ChEBI" id="CHEBI:57288"/>
    </ligand>
</feature>
<feature type="binding site" evidence="3 8">
    <location>
        <position position="134"/>
    </location>
    <ligand>
        <name>substrate</name>
    </ligand>
</feature>
<feature type="binding site" evidence="3 7 8">
    <location>
        <position position="138"/>
    </location>
    <ligand>
        <name>acetyl-CoA</name>
        <dbReference type="ChEBI" id="CHEBI:57288"/>
    </ligand>
</feature>
<feature type="splice variant" id="VSP_059904" description="In isoform 2.">
    <original>MRYIKSEPYYE</original>
    <variation>M</variation>
    <location>
        <begin position="1"/>
        <end position="11"/>
    </location>
</feature>
<feature type="mutagenesis site" description="Reduced acetyltransferase activity; when associated with A-53." evidence="3">
    <original>W</original>
    <variation>A</variation>
    <location>
        <position position="46"/>
    </location>
</feature>
<feature type="mutagenesis site" description="Reduced acetyltransferase activity; when associated with A-46." evidence="3">
    <original>R</original>
    <variation>A</variation>
    <location>
        <position position="53"/>
    </location>
</feature>
<feature type="mutagenesis site" description="Reduced acetyltransferase activity; when associated with A-98." evidence="3">
    <original>K</original>
    <variation>A</variation>
    <location>
        <position position="83"/>
    </location>
</feature>
<feature type="mutagenesis site" description="Does not affect acetyltransferase activity." evidence="3">
    <original>E</original>
    <variation>A</variation>
    <variation>Q</variation>
    <location>
        <position position="97"/>
    </location>
</feature>
<feature type="mutagenesis site" description="Reduced acetyltransferase activity; when associated with A-83." evidence="3">
    <original>S</original>
    <variation>A</variation>
    <location>
        <position position="98"/>
    </location>
</feature>
<feature type="sequence conflict" description="In Ref. 4; AAN71693." evidence="5" ref="4">
    <original>P</original>
    <variation>S</variation>
    <location>
        <position position="14"/>
    </location>
</feature>
<feature type="strand" evidence="12">
    <location>
        <begin position="23"/>
        <end position="27"/>
    </location>
</feature>
<feature type="helix" evidence="12">
    <location>
        <begin position="28"/>
        <end position="30"/>
    </location>
</feature>
<feature type="helix" evidence="12">
    <location>
        <begin position="32"/>
        <end position="34"/>
    </location>
</feature>
<feature type="helix" evidence="12">
    <location>
        <begin position="35"/>
        <end position="45"/>
    </location>
</feature>
<feature type="helix" evidence="12">
    <location>
        <begin position="50"/>
        <end position="58"/>
    </location>
</feature>
<feature type="strand" evidence="12">
    <location>
        <begin position="62"/>
        <end position="72"/>
    </location>
</feature>
<feature type="strand" evidence="12">
    <location>
        <begin position="80"/>
        <end position="87"/>
    </location>
</feature>
<feature type="strand" evidence="12">
    <location>
        <begin position="90"/>
        <end position="101"/>
    </location>
</feature>
<feature type="helix" evidence="12">
    <location>
        <begin position="103"/>
        <end position="105"/>
    </location>
</feature>
<feature type="helix" evidence="12">
    <location>
        <begin position="110"/>
        <end position="124"/>
    </location>
</feature>
<feature type="strand" evidence="12">
    <location>
        <begin position="130"/>
        <end position="137"/>
    </location>
</feature>
<feature type="helix" evidence="12">
    <location>
        <begin position="139"/>
        <end position="144"/>
    </location>
</feature>
<feature type="helix" evidence="11">
    <location>
        <begin position="164"/>
        <end position="166"/>
    </location>
</feature>
<feature type="helix" evidence="12">
    <location>
        <begin position="167"/>
        <end position="170"/>
    </location>
</feature>
<feature type="strand" evidence="12">
    <location>
        <begin position="172"/>
        <end position="177"/>
    </location>
</feature>
<comment type="function">
    <text evidence="3">N-alpha-acetyltransferase that acetylates the amino terminal acidic residue of proteins devoid of initiator methionine (PubMed:29581307). Preferentially acts on proteins starting with Asp-Asp-Asp and Glu-Glu-Glu sequences (PubMed:29581307). In vitro, shows high activity towards N-terminal sequences starting with Met-Asp-Glu-Leu, Met-Glu-Glu-Glu and Met-Asp-Asp-Asp (PubMed:29581307).</text>
</comment>
<comment type="catalytic activity">
    <reaction evidence="3">
        <text>N-terminal L-aspartyl-L-aspartyl-L-aspartyl-[protein] + acetyl-CoA = N-terminal N-acetyl-L-aspartyl-L-aspartyl-L-aspartyl-[protein] + CoA + H(+)</text>
        <dbReference type="Rhea" id="RHEA:57328"/>
        <dbReference type="Rhea" id="RHEA-COMP:14863"/>
        <dbReference type="Rhea" id="RHEA-COMP:14864"/>
        <dbReference type="ChEBI" id="CHEBI:15378"/>
        <dbReference type="ChEBI" id="CHEBI:57287"/>
        <dbReference type="ChEBI" id="CHEBI:57288"/>
        <dbReference type="ChEBI" id="CHEBI:141602"/>
        <dbReference type="ChEBI" id="CHEBI:141604"/>
    </reaction>
</comment>
<comment type="catalytic activity">
    <reaction evidence="1">
        <text>N-terminal L-glutamyl-L-glutamyl-L-glutamyl-[protein] + acetyl-CoA = N-terminal N-acetyl-L-glutamyl-L-glutamyl-L-glutamyl-[protein] + CoA + H(+)</text>
        <dbReference type="Rhea" id="RHEA:57324"/>
        <dbReference type="Rhea" id="RHEA-COMP:14865"/>
        <dbReference type="Rhea" id="RHEA-COMP:14866"/>
        <dbReference type="ChEBI" id="CHEBI:15378"/>
        <dbReference type="ChEBI" id="CHEBI:57287"/>
        <dbReference type="ChEBI" id="CHEBI:57288"/>
        <dbReference type="ChEBI" id="CHEBI:141603"/>
        <dbReference type="ChEBI" id="CHEBI:141606"/>
    </reaction>
</comment>
<comment type="biophysicochemical properties">
    <kinetics>
        <KM evidence="3">0.55 mM for Asp-Asp-Asp-Ile peptide</KM>
        <KM evidence="3">0.6 mM for Glu-Glu-Glu-Ile peptide</KM>
        <KM evidence="3">1.03 mM for Met-Asp-Asp-Asp peptide</KM>
        <KM evidence="3">1.03 mM for Met-Glu-Glu-Glu peptide</KM>
        <KM evidence="3">0.38 mM for Met-Asp-Glu-Leu peptide</KM>
        <text evidence="3">kcat is 0.6 min(-1) for Asp-Asp-Asp-Ile peptide (PubMed:29581307). kcat is 0.6 min(-1) for Glu-Glu-Glu-Ile peptide (PubMed:29581307). kcat is 3.47 min(-1) for Met-Asp-Asp-Asp peptide (PubMed:29581307). kcat is 3.45 min(-1) for Met-Glu-Glu-Glu peptide (PubMed:29581307). kcat is 16.86 min(-1) for Met-Asp-Glu-Leu peptide (PubMed:29581307).</text>
    </kinetics>
</comment>
<comment type="alternative products">
    <event type="alternative splicing"/>
    <isoform>
        <id>Q59DX8-1</id>
        <name>1</name>
        <sequence type="displayed"/>
    </isoform>
    <isoform>
        <id>Q59DX8-2</id>
        <name>2</name>
        <sequence type="described" ref="VSP_059904"/>
    </isoform>
</comment>
<comment type="similarity">
    <text evidence="5">Belongs to the acetyltransferase family.</text>
</comment>
<gene>
    <name evidence="4 6" type="primary">Naa80</name>
    <name evidence="6" type="ORF">CG8481</name>
</gene>